<keyword id="KW-0067">ATP-binding</keyword>
<keyword id="KW-0143">Chaperone</keyword>
<keyword id="KW-0963">Cytoplasm</keyword>
<keyword id="KW-0547">Nucleotide-binding</keyword>
<keyword id="KW-0346">Stress response</keyword>
<feature type="chain" id="PRO_1000012821" description="ATP-dependent protease ATPase subunit HslU">
    <location>
        <begin position="1"/>
        <end position="467"/>
    </location>
</feature>
<feature type="region of interest" description="Disordered" evidence="2">
    <location>
        <begin position="146"/>
        <end position="185"/>
    </location>
</feature>
<feature type="compositionally biased region" description="Acidic residues" evidence="2">
    <location>
        <begin position="168"/>
        <end position="177"/>
    </location>
</feature>
<feature type="binding site" evidence="1">
    <location>
        <position position="22"/>
    </location>
    <ligand>
        <name>ATP</name>
        <dbReference type="ChEBI" id="CHEBI:30616"/>
    </ligand>
</feature>
<feature type="binding site" evidence="1">
    <location>
        <begin position="64"/>
        <end position="69"/>
    </location>
    <ligand>
        <name>ATP</name>
        <dbReference type="ChEBI" id="CHEBI:30616"/>
    </ligand>
</feature>
<feature type="binding site" evidence="1">
    <location>
        <position position="280"/>
    </location>
    <ligand>
        <name>ATP</name>
        <dbReference type="ChEBI" id="CHEBI:30616"/>
    </ligand>
</feature>
<feature type="binding site" evidence="1">
    <location>
        <position position="345"/>
    </location>
    <ligand>
        <name>ATP</name>
        <dbReference type="ChEBI" id="CHEBI:30616"/>
    </ligand>
</feature>
<feature type="binding site" evidence="1">
    <location>
        <position position="417"/>
    </location>
    <ligand>
        <name>ATP</name>
        <dbReference type="ChEBI" id="CHEBI:30616"/>
    </ligand>
</feature>
<protein>
    <recommendedName>
        <fullName evidence="1">ATP-dependent protease ATPase subunit HslU</fullName>
    </recommendedName>
    <alternativeName>
        <fullName evidence="1">Unfoldase HslU</fullName>
    </alternativeName>
</protein>
<dbReference type="EMBL" id="AP006716">
    <property type="protein sequence ID" value="BAE04969.1"/>
    <property type="molecule type" value="Genomic_DNA"/>
</dbReference>
<dbReference type="RefSeq" id="WP_011275946.1">
    <property type="nucleotide sequence ID" value="NC_007168.1"/>
</dbReference>
<dbReference type="SMR" id="Q4L5V6"/>
<dbReference type="GeneID" id="93781038"/>
<dbReference type="KEGG" id="sha:SH1660"/>
<dbReference type="eggNOG" id="COG1220">
    <property type="taxonomic scope" value="Bacteria"/>
</dbReference>
<dbReference type="HOGENOM" id="CLU_033123_0_0_9"/>
<dbReference type="OrthoDB" id="9804062at2"/>
<dbReference type="Proteomes" id="UP000000543">
    <property type="component" value="Chromosome"/>
</dbReference>
<dbReference type="GO" id="GO:0009376">
    <property type="term" value="C:HslUV protease complex"/>
    <property type="evidence" value="ECO:0007669"/>
    <property type="project" value="UniProtKB-UniRule"/>
</dbReference>
<dbReference type="GO" id="GO:0005524">
    <property type="term" value="F:ATP binding"/>
    <property type="evidence" value="ECO:0007669"/>
    <property type="project" value="UniProtKB-UniRule"/>
</dbReference>
<dbReference type="GO" id="GO:0016887">
    <property type="term" value="F:ATP hydrolysis activity"/>
    <property type="evidence" value="ECO:0007669"/>
    <property type="project" value="InterPro"/>
</dbReference>
<dbReference type="GO" id="GO:0008233">
    <property type="term" value="F:peptidase activity"/>
    <property type="evidence" value="ECO:0007669"/>
    <property type="project" value="InterPro"/>
</dbReference>
<dbReference type="GO" id="GO:0036402">
    <property type="term" value="F:proteasome-activating activity"/>
    <property type="evidence" value="ECO:0007669"/>
    <property type="project" value="UniProtKB-UniRule"/>
</dbReference>
<dbReference type="GO" id="GO:0043335">
    <property type="term" value="P:protein unfolding"/>
    <property type="evidence" value="ECO:0007669"/>
    <property type="project" value="UniProtKB-UniRule"/>
</dbReference>
<dbReference type="GO" id="GO:0051603">
    <property type="term" value="P:proteolysis involved in protein catabolic process"/>
    <property type="evidence" value="ECO:0007669"/>
    <property type="project" value="TreeGrafter"/>
</dbReference>
<dbReference type="CDD" id="cd19498">
    <property type="entry name" value="RecA-like_HslU"/>
    <property type="match status" value="1"/>
</dbReference>
<dbReference type="FunFam" id="3.40.50.300:FF:000220">
    <property type="entry name" value="ATP-dependent protease ATPase subunit HslU"/>
    <property type="match status" value="1"/>
</dbReference>
<dbReference type="Gene3D" id="1.10.8.60">
    <property type="match status" value="1"/>
</dbReference>
<dbReference type="Gene3D" id="1.10.8.10">
    <property type="entry name" value="DNA helicase RuvA subunit, C-terminal domain"/>
    <property type="match status" value="1"/>
</dbReference>
<dbReference type="Gene3D" id="3.40.50.300">
    <property type="entry name" value="P-loop containing nucleotide triphosphate hydrolases"/>
    <property type="match status" value="2"/>
</dbReference>
<dbReference type="HAMAP" id="MF_00249">
    <property type="entry name" value="HslU"/>
    <property type="match status" value="1"/>
</dbReference>
<dbReference type="InterPro" id="IPR003593">
    <property type="entry name" value="AAA+_ATPase"/>
</dbReference>
<dbReference type="InterPro" id="IPR050052">
    <property type="entry name" value="ATP-dep_Clp_protease_ClpX"/>
</dbReference>
<dbReference type="InterPro" id="IPR003959">
    <property type="entry name" value="ATPase_AAA_core"/>
</dbReference>
<dbReference type="InterPro" id="IPR019489">
    <property type="entry name" value="Clp_ATPase_C"/>
</dbReference>
<dbReference type="InterPro" id="IPR004491">
    <property type="entry name" value="HslU"/>
</dbReference>
<dbReference type="InterPro" id="IPR027417">
    <property type="entry name" value="P-loop_NTPase"/>
</dbReference>
<dbReference type="NCBIfam" id="TIGR00390">
    <property type="entry name" value="hslU"/>
    <property type="match status" value="1"/>
</dbReference>
<dbReference type="NCBIfam" id="NF003544">
    <property type="entry name" value="PRK05201.1"/>
    <property type="match status" value="1"/>
</dbReference>
<dbReference type="PANTHER" id="PTHR48102">
    <property type="entry name" value="ATP-DEPENDENT CLP PROTEASE ATP-BINDING SUBUNIT CLPX-LIKE, MITOCHONDRIAL-RELATED"/>
    <property type="match status" value="1"/>
</dbReference>
<dbReference type="PANTHER" id="PTHR48102:SF3">
    <property type="entry name" value="ATP-DEPENDENT PROTEASE ATPASE SUBUNIT HSLU"/>
    <property type="match status" value="1"/>
</dbReference>
<dbReference type="Pfam" id="PF00004">
    <property type="entry name" value="AAA"/>
    <property type="match status" value="1"/>
</dbReference>
<dbReference type="Pfam" id="PF07724">
    <property type="entry name" value="AAA_2"/>
    <property type="match status" value="1"/>
</dbReference>
<dbReference type="Pfam" id="PF10431">
    <property type="entry name" value="ClpB_D2-small"/>
    <property type="match status" value="1"/>
</dbReference>
<dbReference type="SMART" id="SM00382">
    <property type="entry name" value="AAA"/>
    <property type="match status" value="1"/>
</dbReference>
<dbReference type="SMART" id="SM01086">
    <property type="entry name" value="ClpB_D2-small"/>
    <property type="match status" value="1"/>
</dbReference>
<dbReference type="SUPFAM" id="SSF52540">
    <property type="entry name" value="P-loop containing nucleoside triphosphate hydrolases"/>
    <property type="match status" value="1"/>
</dbReference>
<gene>
    <name evidence="1" type="primary">hslU</name>
    <name type="ordered locus">SH1660</name>
</gene>
<comment type="function">
    <text evidence="1">ATPase subunit of a proteasome-like degradation complex; this subunit has chaperone activity. The binding of ATP and its subsequent hydrolysis by HslU are essential for unfolding of protein substrates subsequently hydrolyzed by HslV. HslU recognizes the N-terminal part of its protein substrates and unfolds these before they are guided to HslV for hydrolysis.</text>
</comment>
<comment type="subunit">
    <text evidence="1">A double ring-shaped homohexamer of HslV is capped on each side by a ring-shaped HslU homohexamer. The assembly of the HslU/HslV complex is dependent on binding of ATP.</text>
</comment>
<comment type="subcellular location">
    <subcellularLocation>
        <location evidence="1">Cytoplasm</location>
    </subcellularLocation>
</comment>
<comment type="similarity">
    <text evidence="1">Belongs to the ClpX chaperone family. HslU subfamily.</text>
</comment>
<evidence type="ECO:0000255" key="1">
    <source>
        <dbReference type="HAMAP-Rule" id="MF_00249"/>
    </source>
</evidence>
<evidence type="ECO:0000256" key="2">
    <source>
        <dbReference type="SAM" id="MobiDB-lite"/>
    </source>
</evidence>
<reference key="1">
    <citation type="journal article" date="2005" name="J. Bacteriol.">
        <title>Whole-genome sequencing of Staphylococcus haemolyticus uncovers the extreme plasticity of its genome and the evolution of human-colonizing staphylococcal species.</title>
        <authorList>
            <person name="Takeuchi F."/>
            <person name="Watanabe S."/>
            <person name="Baba T."/>
            <person name="Yuzawa H."/>
            <person name="Ito T."/>
            <person name="Morimoto Y."/>
            <person name="Kuroda M."/>
            <person name="Cui L."/>
            <person name="Takahashi M."/>
            <person name="Ankai A."/>
            <person name="Baba S."/>
            <person name="Fukui S."/>
            <person name="Lee J.C."/>
            <person name="Hiramatsu K."/>
        </authorList>
    </citation>
    <scope>NUCLEOTIDE SEQUENCE [LARGE SCALE GENOMIC DNA]</scope>
    <source>
        <strain>JCSC1435</strain>
    </source>
</reference>
<sequence>MDANGIKLTPKDIVSKLDEYIVGQDDAKRKVAIALRNRYRRSLLDEETKQEIAPKNILMIGPTGVGKTEIARRMAKVVGAPFIKVEATKFTEVGYVGRDVESMVRDLVDVAVRLVKDQKKGLVKDEAVNKANEKLVKLLVPSMKKKASNNSNPLESLLGGAIPNFGNNDDEEEETPTEEIKTKRSEIKKQLLDGKLEEEKVRIKVEQDPGALGMLGTNQNQQMQDMMNQLMPKRKVEREVPVKTARKILADDFADELIDQETANQEALELAEQMGIIFIDEIDKVATNNANSGQDVSRQGVQRDILPILEGSMIQTKYGTVNTEHMLFIGAGAFHVSKPSDLIPELQGRFPIRVELESLTVDDFYRILTEPKLSLIKQYEALLQTEEVTVNFTKEAITRLAEMAYQVNQDTDNIGARRLHTILEKMLEDLSFEAPSMPNAVVDITPQYVDDKLKSISTNKDLSAFIL</sequence>
<name>HSLU_STAHJ</name>
<accession>Q4L5V6</accession>
<organism>
    <name type="scientific">Staphylococcus haemolyticus (strain JCSC1435)</name>
    <dbReference type="NCBI Taxonomy" id="279808"/>
    <lineage>
        <taxon>Bacteria</taxon>
        <taxon>Bacillati</taxon>
        <taxon>Bacillota</taxon>
        <taxon>Bacilli</taxon>
        <taxon>Bacillales</taxon>
        <taxon>Staphylococcaceae</taxon>
        <taxon>Staphylococcus</taxon>
    </lineage>
</organism>
<proteinExistence type="inferred from homology"/>